<evidence type="ECO:0000250" key="1">
    <source>
        <dbReference type="UniProtKB" id="Q9BSG1"/>
    </source>
</evidence>
<evidence type="ECO:0000255" key="2">
    <source>
        <dbReference type="PROSITE-ProRule" id="PRU00042"/>
    </source>
</evidence>
<evidence type="ECO:0000255" key="3">
    <source>
        <dbReference type="PROSITE-ProRule" id="PRU00119"/>
    </source>
</evidence>
<evidence type="ECO:0000256" key="4">
    <source>
        <dbReference type="SAM" id="MobiDB-lite"/>
    </source>
</evidence>
<evidence type="ECO:0000305" key="5"/>
<dbReference type="EMBL" id="BC113303">
    <property type="protein sequence ID" value="AAI13304.1"/>
    <property type="molecule type" value="mRNA"/>
</dbReference>
<dbReference type="RefSeq" id="NP_001039911.1">
    <property type="nucleotide sequence ID" value="NM_001046446.2"/>
</dbReference>
<dbReference type="RefSeq" id="XP_010808051.2">
    <property type="nucleotide sequence ID" value="XM_010809749.4"/>
</dbReference>
<dbReference type="SMR" id="Q29RZ4"/>
<dbReference type="PaxDb" id="9913-ENSBTAP00000002533"/>
<dbReference type="GeneID" id="539022"/>
<dbReference type="KEGG" id="bta:539022"/>
<dbReference type="CTD" id="7549"/>
<dbReference type="eggNOG" id="KOG1721">
    <property type="taxonomic scope" value="Eukaryota"/>
</dbReference>
<dbReference type="InParanoid" id="Q29RZ4"/>
<dbReference type="OrthoDB" id="6077919at2759"/>
<dbReference type="Proteomes" id="UP000009136">
    <property type="component" value="Unplaced"/>
</dbReference>
<dbReference type="GO" id="GO:0005634">
    <property type="term" value="C:nucleus"/>
    <property type="evidence" value="ECO:0007669"/>
    <property type="project" value="UniProtKB-SubCell"/>
</dbReference>
<dbReference type="GO" id="GO:0003677">
    <property type="term" value="F:DNA binding"/>
    <property type="evidence" value="ECO:0007669"/>
    <property type="project" value="UniProtKB-KW"/>
</dbReference>
<dbReference type="GO" id="GO:0008270">
    <property type="term" value="F:zinc ion binding"/>
    <property type="evidence" value="ECO:0007669"/>
    <property type="project" value="UniProtKB-KW"/>
</dbReference>
<dbReference type="GO" id="GO:0006355">
    <property type="term" value="P:regulation of DNA-templated transcription"/>
    <property type="evidence" value="ECO:0007669"/>
    <property type="project" value="InterPro"/>
</dbReference>
<dbReference type="CDD" id="cd07765">
    <property type="entry name" value="KRAB_A-box"/>
    <property type="match status" value="1"/>
</dbReference>
<dbReference type="FunFam" id="3.30.160.60:FF:001677">
    <property type="entry name" value="Zinc finger protein 2"/>
    <property type="match status" value="1"/>
</dbReference>
<dbReference type="FunFam" id="3.30.160.60:FF:000380">
    <property type="entry name" value="zinc finger protein 2 isoform X2"/>
    <property type="match status" value="1"/>
</dbReference>
<dbReference type="FunFam" id="3.30.160.60:FF:000586">
    <property type="entry name" value="zinc finger protein 2 isoform X2"/>
    <property type="match status" value="1"/>
</dbReference>
<dbReference type="FunFam" id="3.30.160.60:FF:000794">
    <property type="entry name" value="zinc finger protein 2 isoform X2"/>
    <property type="match status" value="1"/>
</dbReference>
<dbReference type="FunFam" id="3.30.160.60:FF:000947">
    <property type="entry name" value="zinc finger protein 2 isoform X2"/>
    <property type="match status" value="1"/>
</dbReference>
<dbReference type="FunFam" id="3.30.160.60:FF:002343">
    <property type="entry name" value="Zinc finger protein 33A"/>
    <property type="match status" value="1"/>
</dbReference>
<dbReference type="FunFam" id="3.30.160.60:FF:001119">
    <property type="entry name" value="zinc finger protein 408"/>
    <property type="match status" value="1"/>
</dbReference>
<dbReference type="FunFam" id="3.30.160.60:FF:000899">
    <property type="entry name" value="zinc finger protein 558 isoform X2"/>
    <property type="match status" value="1"/>
</dbReference>
<dbReference type="FunFam" id="3.30.160.60:FF:000737">
    <property type="entry name" value="Zinc finger protein 565"/>
    <property type="match status" value="1"/>
</dbReference>
<dbReference type="Gene3D" id="6.10.140.140">
    <property type="match status" value="1"/>
</dbReference>
<dbReference type="Gene3D" id="3.30.160.60">
    <property type="entry name" value="Classic Zinc Finger"/>
    <property type="match status" value="9"/>
</dbReference>
<dbReference type="InterPro" id="IPR001909">
    <property type="entry name" value="KRAB"/>
</dbReference>
<dbReference type="InterPro" id="IPR036051">
    <property type="entry name" value="KRAB_dom_sf"/>
</dbReference>
<dbReference type="InterPro" id="IPR036236">
    <property type="entry name" value="Znf_C2H2_sf"/>
</dbReference>
<dbReference type="InterPro" id="IPR013087">
    <property type="entry name" value="Znf_C2H2_type"/>
</dbReference>
<dbReference type="PANTHER" id="PTHR24381">
    <property type="entry name" value="ZINC FINGER PROTEIN"/>
    <property type="match status" value="1"/>
</dbReference>
<dbReference type="PANTHER" id="PTHR24381:SF384">
    <property type="entry name" value="ZINC FINGER PROTEIN 2"/>
    <property type="match status" value="1"/>
</dbReference>
<dbReference type="Pfam" id="PF01352">
    <property type="entry name" value="KRAB"/>
    <property type="match status" value="1"/>
</dbReference>
<dbReference type="Pfam" id="PF00096">
    <property type="entry name" value="zf-C2H2"/>
    <property type="match status" value="5"/>
</dbReference>
<dbReference type="Pfam" id="PF13465">
    <property type="entry name" value="zf-H2C2_2"/>
    <property type="match status" value="2"/>
</dbReference>
<dbReference type="SMART" id="SM00349">
    <property type="entry name" value="KRAB"/>
    <property type="match status" value="1"/>
</dbReference>
<dbReference type="SMART" id="SM00355">
    <property type="entry name" value="ZnF_C2H2"/>
    <property type="match status" value="9"/>
</dbReference>
<dbReference type="SUPFAM" id="SSF57667">
    <property type="entry name" value="beta-beta-alpha zinc fingers"/>
    <property type="match status" value="5"/>
</dbReference>
<dbReference type="SUPFAM" id="SSF109640">
    <property type="entry name" value="KRAB domain (Kruppel-associated box)"/>
    <property type="match status" value="1"/>
</dbReference>
<dbReference type="PROSITE" id="PS50805">
    <property type="entry name" value="KRAB"/>
    <property type="match status" value="1"/>
</dbReference>
<dbReference type="PROSITE" id="PS00028">
    <property type="entry name" value="ZINC_FINGER_C2H2_1"/>
    <property type="match status" value="8"/>
</dbReference>
<dbReference type="PROSITE" id="PS50157">
    <property type="entry name" value="ZINC_FINGER_C2H2_2"/>
    <property type="match status" value="9"/>
</dbReference>
<organism>
    <name type="scientific">Bos taurus</name>
    <name type="common">Bovine</name>
    <dbReference type="NCBI Taxonomy" id="9913"/>
    <lineage>
        <taxon>Eukaryota</taxon>
        <taxon>Metazoa</taxon>
        <taxon>Chordata</taxon>
        <taxon>Craniata</taxon>
        <taxon>Vertebrata</taxon>
        <taxon>Euteleostomi</taxon>
        <taxon>Mammalia</taxon>
        <taxon>Eutheria</taxon>
        <taxon>Laurasiatheria</taxon>
        <taxon>Artiodactyla</taxon>
        <taxon>Ruminantia</taxon>
        <taxon>Pecora</taxon>
        <taxon>Bovidae</taxon>
        <taxon>Bovinae</taxon>
        <taxon>Bos</taxon>
    </lineage>
</organism>
<name>ZNF2_BOVIN</name>
<feature type="chain" id="PRO_0000274048" description="Zinc finger protein 2">
    <location>
        <begin position="1"/>
        <end position="425"/>
    </location>
</feature>
<feature type="domain" description="KRAB" evidence="3">
    <location>
        <begin position="14"/>
        <end position="85"/>
    </location>
</feature>
<feature type="zinc finger region" description="C2H2-type 1" evidence="2">
    <location>
        <begin position="173"/>
        <end position="195"/>
    </location>
</feature>
<feature type="zinc finger region" description="C2H2-type 2" evidence="2">
    <location>
        <begin position="201"/>
        <end position="223"/>
    </location>
</feature>
<feature type="zinc finger region" description="C2H2-type 3" evidence="2">
    <location>
        <begin position="229"/>
        <end position="251"/>
    </location>
</feature>
<feature type="zinc finger region" description="C2H2-type 4" evidence="2">
    <location>
        <begin position="257"/>
        <end position="279"/>
    </location>
</feature>
<feature type="zinc finger region" description="C2H2-type 5" evidence="2">
    <location>
        <begin position="285"/>
        <end position="307"/>
    </location>
</feature>
<feature type="zinc finger region" description="C2H2-type 6" evidence="2">
    <location>
        <begin position="313"/>
        <end position="335"/>
    </location>
</feature>
<feature type="zinc finger region" description="C2H2-type 7" evidence="2">
    <location>
        <begin position="341"/>
        <end position="363"/>
    </location>
</feature>
<feature type="zinc finger region" description="C2H2-type 8" evidence="2">
    <location>
        <begin position="369"/>
        <end position="391"/>
    </location>
</feature>
<feature type="zinc finger region" description="C2H2-type 9; degenerate" evidence="2">
    <location>
        <begin position="397"/>
        <end position="419"/>
    </location>
</feature>
<feature type="region of interest" description="Disordered" evidence="4">
    <location>
        <begin position="97"/>
        <end position="124"/>
    </location>
</feature>
<feature type="compositionally biased region" description="Basic and acidic residues" evidence="4">
    <location>
        <begin position="103"/>
        <end position="116"/>
    </location>
</feature>
<protein>
    <recommendedName>
        <fullName evidence="1">Zinc finger protein 2</fullName>
    </recommendedName>
</protein>
<comment type="function">
    <text>May be involved in transcriptional regulation.</text>
</comment>
<comment type="subcellular location">
    <subcellularLocation>
        <location evidence="5">Nucleus</location>
    </subcellularLocation>
</comment>
<comment type="similarity">
    <text evidence="5">Belongs to the krueppel C2H2-type zinc-finger protein family.</text>
</comment>
<gene>
    <name evidence="1" type="primary">ZNF2</name>
</gene>
<accession>Q29RZ4</accession>
<sequence length="425" mass="48223">MAAVSPTRCQDPVTFEDVAVVFTDEEWRRLVPTQRDLYKEVMLENYKSIVSLGLPVPGPDVIFQLKRGDEPWLVEFHGFEGKEGAENVSLDWETKPEIQGASEEEKSEGSLKENLGRKGPPSPKVEVYVLDGRLGTEKESPTVEACKKPPSLEESLRHRATPPKKFLTKERDQECSNCGKTFFDHSSLIRHQRTHTGEKPYDCPECGKAFSHRSSLSRHLMSHTGESPYECNACGKAFFDRSSLTVHQRIHTGEKPFKCSECGKAFFDRSSLTRHQRIHTGESPYECNQCGKAFSQKSILTRHQLIHTGRKPYECNECGKAFYGVSSLNRHQKAHAGEPRYQCSECGKAFFDRSSLTQHQKIHTGDKPYECSECGKAFSQRCRLTRHQRVHTGEKPFECSVCGKVFSSKSSVIQHQRRYAKQGID</sequence>
<proteinExistence type="evidence at transcript level"/>
<reference key="1">
    <citation type="submission" date="2006-02" db="EMBL/GenBank/DDBJ databases">
        <authorList>
            <consortium name="NIH - Mammalian Gene Collection (MGC) project"/>
        </authorList>
    </citation>
    <scope>NUCLEOTIDE SEQUENCE [LARGE SCALE MRNA]</scope>
    <source>
        <strain>Hereford</strain>
        <tissue>Uterus</tissue>
    </source>
</reference>
<keyword id="KW-0238">DNA-binding</keyword>
<keyword id="KW-0479">Metal-binding</keyword>
<keyword id="KW-0539">Nucleus</keyword>
<keyword id="KW-1185">Reference proteome</keyword>
<keyword id="KW-0677">Repeat</keyword>
<keyword id="KW-0804">Transcription</keyword>
<keyword id="KW-0805">Transcription regulation</keyword>
<keyword id="KW-0862">Zinc</keyword>
<keyword id="KW-0863">Zinc-finger</keyword>